<feature type="chain" id="PRO_0000249344" description="Thioredoxin domain-containing protein R362">
    <location>
        <begin position="1"/>
        <end position="346"/>
    </location>
</feature>
<feature type="domain" description="Thioredoxin" evidence="1">
    <location>
        <begin position="212"/>
        <end position="345"/>
    </location>
</feature>
<reference key="1">
    <citation type="journal article" date="2004" name="Science">
        <title>The 1.2-megabase genome sequence of Mimivirus.</title>
        <authorList>
            <person name="Raoult D."/>
            <person name="Audic S."/>
            <person name="Robert C."/>
            <person name="Abergel C."/>
            <person name="Renesto P."/>
            <person name="Ogata H."/>
            <person name="La Scola B."/>
            <person name="Susan M."/>
            <person name="Claverie J.-M."/>
        </authorList>
    </citation>
    <scope>NUCLEOTIDE SEQUENCE [LARGE SCALE GENOMIC DNA]</scope>
    <source>
        <strain>Rowbotham-Bradford</strain>
    </source>
</reference>
<reference key="2">
    <citation type="journal article" date="2006" name="J. Virol.">
        <title>Mimivirus giant particles incorporate a large fraction of anonymous and unique gene products.</title>
        <authorList>
            <person name="Renesto P."/>
            <person name="Abergel C."/>
            <person name="Decloquement P."/>
            <person name="Moinier D."/>
            <person name="Azza S."/>
            <person name="Ogata H."/>
            <person name="Fourquet P."/>
            <person name="Gorvel J.-P."/>
            <person name="Claverie J.-M."/>
            <person name="Raoult D."/>
        </authorList>
    </citation>
    <scope>IDENTIFICATION BY MASS SPECTROMETRY [LARGE SCALE ANALYSIS]</scope>
    <scope>SUBCELLULAR LOCATION</scope>
</reference>
<gene>
    <name type="ordered locus">MIMI_R362</name>
</gene>
<accession>Q5UR25</accession>
<name>TR362_MIMIV</name>
<dbReference type="EMBL" id="AY653733">
    <property type="protein sequence ID" value="AAV50631.1"/>
    <property type="molecule type" value="Genomic_DNA"/>
</dbReference>
<dbReference type="KEGG" id="vg:9924982"/>
<dbReference type="OrthoDB" id="25418at10239"/>
<dbReference type="Proteomes" id="UP000001134">
    <property type="component" value="Genome"/>
</dbReference>
<dbReference type="GO" id="GO:0044423">
    <property type="term" value="C:virion component"/>
    <property type="evidence" value="ECO:0007669"/>
    <property type="project" value="UniProtKB-KW"/>
</dbReference>
<dbReference type="GO" id="GO:0015035">
    <property type="term" value="F:protein-disulfide reductase activity"/>
    <property type="evidence" value="ECO:0007669"/>
    <property type="project" value="TreeGrafter"/>
</dbReference>
<dbReference type="CDD" id="cd02961">
    <property type="entry name" value="PDI_a_family"/>
    <property type="match status" value="1"/>
</dbReference>
<dbReference type="Gene3D" id="3.40.30.10">
    <property type="entry name" value="Glutaredoxin"/>
    <property type="match status" value="1"/>
</dbReference>
<dbReference type="InterPro" id="IPR036249">
    <property type="entry name" value="Thioredoxin-like_sf"/>
</dbReference>
<dbReference type="InterPro" id="IPR013766">
    <property type="entry name" value="Thioredoxin_domain"/>
</dbReference>
<dbReference type="PANTHER" id="PTHR45663">
    <property type="entry name" value="GEO12009P1"/>
    <property type="match status" value="1"/>
</dbReference>
<dbReference type="PANTHER" id="PTHR45663:SF11">
    <property type="entry name" value="GEO12009P1"/>
    <property type="match status" value="1"/>
</dbReference>
<dbReference type="Pfam" id="PF00085">
    <property type="entry name" value="Thioredoxin"/>
    <property type="match status" value="1"/>
</dbReference>
<dbReference type="PRINTS" id="PR00421">
    <property type="entry name" value="THIOREDOXIN"/>
</dbReference>
<dbReference type="SUPFAM" id="SSF52833">
    <property type="entry name" value="Thioredoxin-like"/>
    <property type="match status" value="1"/>
</dbReference>
<dbReference type="PROSITE" id="PS51352">
    <property type="entry name" value="THIOREDOXIN_2"/>
    <property type="match status" value="1"/>
</dbReference>
<organismHost>
    <name type="scientific">Acanthamoeba polyphaga</name>
    <name type="common">Amoeba</name>
    <dbReference type="NCBI Taxonomy" id="5757"/>
</organismHost>
<evidence type="ECO:0000255" key="1">
    <source>
        <dbReference type="PROSITE-ProRule" id="PRU00691"/>
    </source>
</evidence>
<evidence type="ECO:0000269" key="2">
    <source>
    </source>
</evidence>
<comment type="subcellular location">
    <subcellularLocation>
        <location evidence="2">Virion</location>
    </subcellularLocation>
</comment>
<proteinExistence type="evidence at protein level"/>
<organism>
    <name type="scientific">Acanthamoeba polyphaga mimivirus</name>
    <name type="common">APMV</name>
    <dbReference type="NCBI Taxonomy" id="212035"/>
    <lineage>
        <taxon>Viruses</taxon>
        <taxon>Varidnaviria</taxon>
        <taxon>Bamfordvirae</taxon>
        <taxon>Nucleocytoviricota</taxon>
        <taxon>Megaviricetes</taxon>
        <taxon>Imitervirales</taxon>
        <taxon>Mimiviridae</taxon>
        <taxon>Megamimivirinae</taxon>
        <taxon>Mimivirus</taxon>
        <taxon>Mimivirus bradfordmassiliense</taxon>
    </lineage>
</organism>
<protein>
    <recommendedName>
        <fullName>Thioredoxin domain-containing protein R362</fullName>
    </recommendedName>
</protein>
<keyword id="KW-1185">Reference proteome</keyword>
<keyword id="KW-0946">Virion</keyword>
<sequence length="346" mass="39473">MSIVTNGNLNKYFQQIKNLKEEFVKKYNSGESTEEIIGKMRQIHGQAIFEDTRNKFQLAKNNKLNPSDFYNLSVDYCTLANMDKKIRHLEILQFERKHKGYTHKGLDTDKYEINRSLIRSNGPLVGTTQPIQSTQANQISMTGKGTQDPVNKVRPEIRKDDDGVDVISLHNTQTEDVTTRRVNSDVIPTEFNNTMNTQNQSNSNYLNTTEYLTNLSNTEANRLMSDYNNGNYELTDSQKQQGGNHIFEVGKPTVVNFYADWCGYSRQFMPNWEKVRDSVKKKYGERIQLSSLNVGQDTDKVNISKNAGVNGYPTVVIFKDGNTYHKVAGNASADDIVKFIDETMSR</sequence>